<reference key="1">
    <citation type="journal article" date="1999" name="Cell">
        <title>Crystal structure of Thermus aquaticus core RNA polymerase at 3.3 A resolution.</title>
        <authorList>
            <person name="Zhang G."/>
            <person name="Campbell E.A."/>
            <person name="Minakhin L."/>
            <person name="Richter C."/>
            <person name="Severinov K."/>
            <person name="Darst S.A."/>
        </authorList>
    </citation>
    <scope>NUCLEOTIDE SEQUENCE [GENOMIC DNA]</scope>
    <scope>X-RAY CRYSTALLOGRAPHY (3.3 ANGSTROMS)</scope>
</reference>
<comment type="function">
    <text>DNA-dependent RNA polymerase catalyzes the transcription of DNA into RNA using the four ribonucleoside triphosphates as substrates.</text>
</comment>
<comment type="catalytic activity">
    <reaction evidence="1">
        <text>RNA(n) + a ribonucleoside 5'-triphosphate = RNA(n+1) + diphosphate</text>
        <dbReference type="Rhea" id="RHEA:21248"/>
        <dbReference type="Rhea" id="RHEA-COMP:14527"/>
        <dbReference type="Rhea" id="RHEA-COMP:17342"/>
        <dbReference type="ChEBI" id="CHEBI:33019"/>
        <dbReference type="ChEBI" id="CHEBI:61557"/>
        <dbReference type="ChEBI" id="CHEBI:140395"/>
        <dbReference type="EC" id="2.7.7.6"/>
    </reaction>
</comment>
<comment type="subunit">
    <text>The RNAP catalytic core consists of 2 alpha, 1 beta, 1 beta' and 1 omega subunit. When a sigma factor is associated with the core the holoenzyme is formed, which can initiate transcription.</text>
</comment>
<comment type="similarity">
    <text evidence="1">Belongs to the RNA polymerase beta chain family.</text>
</comment>
<keyword id="KW-0002">3D-structure</keyword>
<keyword id="KW-0240">DNA-directed RNA polymerase</keyword>
<keyword id="KW-0548">Nucleotidyltransferase</keyword>
<keyword id="KW-0804">Transcription</keyword>
<keyword id="KW-0808">Transferase</keyword>
<accession>Q9KWU7</accession>
<organism>
    <name type="scientific">Thermus aquaticus</name>
    <dbReference type="NCBI Taxonomy" id="271"/>
    <lineage>
        <taxon>Bacteria</taxon>
        <taxon>Thermotogati</taxon>
        <taxon>Deinococcota</taxon>
        <taxon>Deinococci</taxon>
        <taxon>Thermales</taxon>
        <taxon>Thermaceae</taxon>
        <taxon>Thermus</taxon>
    </lineage>
</organism>
<dbReference type="EC" id="2.7.7.6" evidence="1"/>
<dbReference type="EMBL" id="Y19223">
    <property type="protein sequence ID" value="CAB65465.2"/>
    <property type="molecule type" value="Genomic_DNA"/>
</dbReference>
<dbReference type="PDB" id="1HQM">
    <property type="method" value="X-ray"/>
    <property type="resolution" value="3.30 A"/>
    <property type="chains" value="C=1-1119"/>
</dbReference>
<dbReference type="PDB" id="1I6V">
    <property type="method" value="X-ray"/>
    <property type="resolution" value="3.30 A"/>
    <property type="chains" value="C=1-1119"/>
</dbReference>
<dbReference type="PDB" id="1L9U">
    <property type="method" value="X-ray"/>
    <property type="resolution" value="4.00 A"/>
    <property type="chains" value="C/L=1-1119"/>
</dbReference>
<dbReference type="PDB" id="1L9Z">
    <property type="method" value="X-ray"/>
    <property type="resolution" value="6.50 A"/>
    <property type="chains" value="C=1-1119"/>
</dbReference>
<dbReference type="PDB" id="1YNJ">
    <property type="method" value="X-ray"/>
    <property type="resolution" value="3.20 A"/>
    <property type="chains" value="C=1-1119"/>
</dbReference>
<dbReference type="PDB" id="1YNN">
    <property type="method" value="X-ray"/>
    <property type="resolution" value="3.30 A"/>
    <property type="chains" value="C=1-1119"/>
</dbReference>
<dbReference type="PDB" id="2GHO">
    <property type="method" value="X-ray"/>
    <property type="resolution" value="5.00 A"/>
    <property type="chains" value="C=1-1119"/>
</dbReference>
<dbReference type="PDB" id="3MLQ">
    <property type="method" value="X-ray"/>
    <property type="resolution" value="2.91 A"/>
    <property type="chains" value="A/B/C/D=17-139, A/B/C/D=334-395"/>
</dbReference>
<dbReference type="PDB" id="4XAX">
    <property type="method" value="X-ray"/>
    <property type="resolution" value="2.40 A"/>
    <property type="chains" value="A=17-139, A=334-392"/>
</dbReference>
<dbReference type="PDB" id="4XLN">
    <property type="method" value="X-ray"/>
    <property type="resolution" value="4.00 A"/>
    <property type="chains" value="C/I=1-1119"/>
</dbReference>
<dbReference type="PDB" id="4XLP">
    <property type="method" value="X-ray"/>
    <property type="resolution" value="4.00 A"/>
    <property type="chains" value="C/I=1-1119"/>
</dbReference>
<dbReference type="PDB" id="4XLQ">
    <property type="method" value="X-ray"/>
    <property type="resolution" value="4.60 A"/>
    <property type="chains" value="C/I=1-1119"/>
</dbReference>
<dbReference type="PDB" id="4XLR">
    <property type="method" value="X-ray"/>
    <property type="resolution" value="4.30 A"/>
    <property type="chains" value="C/I=1-1119"/>
</dbReference>
<dbReference type="PDB" id="4XLS">
    <property type="method" value="X-ray"/>
    <property type="resolution" value="4.01 A"/>
    <property type="chains" value="C/I=1-1119"/>
</dbReference>
<dbReference type="PDB" id="5TJG">
    <property type="method" value="X-ray"/>
    <property type="resolution" value="2.60 A"/>
    <property type="chains" value="C=1-1119"/>
</dbReference>
<dbReference type="PDBsum" id="1HQM"/>
<dbReference type="PDBsum" id="1I6V"/>
<dbReference type="PDBsum" id="1L9U"/>
<dbReference type="PDBsum" id="1L9Z"/>
<dbReference type="PDBsum" id="1YNJ"/>
<dbReference type="PDBsum" id="1YNN"/>
<dbReference type="PDBsum" id="2GHO"/>
<dbReference type="PDBsum" id="3MLQ"/>
<dbReference type="PDBsum" id="4XAX"/>
<dbReference type="PDBsum" id="4XLN"/>
<dbReference type="PDBsum" id="4XLP"/>
<dbReference type="PDBsum" id="4XLQ"/>
<dbReference type="PDBsum" id="4XLR"/>
<dbReference type="PDBsum" id="4XLS"/>
<dbReference type="PDBsum" id="5TJG"/>
<dbReference type="SMR" id="Q9KWU7"/>
<dbReference type="EvolutionaryTrace" id="Q9KWU7"/>
<dbReference type="GO" id="GO:0000428">
    <property type="term" value="C:DNA-directed RNA polymerase complex"/>
    <property type="evidence" value="ECO:0007669"/>
    <property type="project" value="UniProtKB-KW"/>
</dbReference>
<dbReference type="GO" id="GO:0003677">
    <property type="term" value="F:DNA binding"/>
    <property type="evidence" value="ECO:0007669"/>
    <property type="project" value="UniProtKB-UniRule"/>
</dbReference>
<dbReference type="GO" id="GO:0003899">
    <property type="term" value="F:DNA-directed RNA polymerase activity"/>
    <property type="evidence" value="ECO:0007669"/>
    <property type="project" value="UniProtKB-UniRule"/>
</dbReference>
<dbReference type="GO" id="GO:0032549">
    <property type="term" value="F:ribonucleoside binding"/>
    <property type="evidence" value="ECO:0007669"/>
    <property type="project" value="InterPro"/>
</dbReference>
<dbReference type="GO" id="GO:0006351">
    <property type="term" value="P:DNA-templated transcription"/>
    <property type="evidence" value="ECO:0007669"/>
    <property type="project" value="UniProtKB-UniRule"/>
</dbReference>
<dbReference type="CDD" id="cd00653">
    <property type="entry name" value="RNA_pol_B_RPB2"/>
    <property type="match status" value="1"/>
</dbReference>
<dbReference type="FunFam" id="3.90.1800.10:FF:000001">
    <property type="entry name" value="DNA-directed RNA polymerase subunit beta"/>
    <property type="match status" value="1"/>
</dbReference>
<dbReference type="Gene3D" id="2.40.50.100">
    <property type="match status" value="1"/>
</dbReference>
<dbReference type="Gene3D" id="2.40.50.150">
    <property type="match status" value="1"/>
</dbReference>
<dbReference type="Gene3D" id="3.90.1100.10">
    <property type="match status" value="1"/>
</dbReference>
<dbReference type="Gene3D" id="2.30.150.10">
    <property type="entry name" value="DNA-directed RNA polymerase, beta subunit, external 1 domain"/>
    <property type="match status" value="1"/>
</dbReference>
<dbReference type="Gene3D" id="2.40.270.10">
    <property type="entry name" value="DNA-directed RNA polymerase, subunit 2, domain 6"/>
    <property type="match status" value="1"/>
</dbReference>
<dbReference type="Gene3D" id="3.90.1800.10">
    <property type="entry name" value="RNA polymerase alpha subunit dimerisation domain"/>
    <property type="match status" value="1"/>
</dbReference>
<dbReference type="Gene3D" id="3.90.1110.10">
    <property type="entry name" value="RNA polymerase Rpb2, domain 2"/>
    <property type="match status" value="1"/>
</dbReference>
<dbReference type="HAMAP" id="MF_01321">
    <property type="entry name" value="RNApol_bact_RpoB"/>
    <property type="match status" value="1"/>
</dbReference>
<dbReference type="InterPro" id="IPR042107">
    <property type="entry name" value="DNA-dir_RNA_pol_bsu_ext_1_sf"/>
</dbReference>
<dbReference type="InterPro" id="IPR019462">
    <property type="entry name" value="DNA-dir_RNA_pol_bsu_external_1"/>
</dbReference>
<dbReference type="InterPro" id="IPR015712">
    <property type="entry name" value="DNA-dir_RNA_pol_su2"/>
</dbReference>
<dbReference type="InterPro" id="IPR007120">
    <property type="entry name" value="DNA-dir_RNAP_su2_dom"/>
</dbReference>
<dbReference type="InterPro" id="IPR037033">
    <property type="entry name" value="DNA-dir_RNAP_su2_hyb_sf"/>
</dbReference>
<dbReference type="InterPro" id="IPR010243">
    <property type="entry name" value="RNA_pol_bsu_bac"/>
</dbReference>
<dbReference type="InterPro" id="IPR007121">
    <property type="entry name" value="RNA_pol_bsu_CS"/>
</dbReference>
<dbReference type="InterPro" id="IPR007644">
    <property type="entry name" value="RNA_pol_bsu_protrusion"/>
</dbReference>
<dbReference type="InterPro" id="IPR007642">
    <property type="entry name" value="RNA_pol_Rpb2_2"/>
</dbReference>
<dbReference type="InterPro" id="IPR037034">
    <property type="entry name" value="RNA_pol_Rpb2_2_sf"/>
</dbReference>
<dbReference type="InterPro" id="IPR007645">
    <property type="entry name" value="RNA_pol_Rpb2_3"/>
</dbReference>
<dbReference type="InterPro" id="IPR007641">
    <property type="entry name" value="RNA_pol_Rpb2_7"/>
</dbReference>
<dbReference type="InterPro" id="IPR014724">
    <property type="entry name" value="RNA_pol_RPB2_OB-fold"/>
</dbReference>
<dbReference type="NCBIfam" id="NF001616">
    <property type="entry name" value="PRK00405.1"/>
    <property type="match status" value="1"/>
</dbReference>
<dbReference type="NCBIfam" id="TIGR02013">
    <property type="entry name" value="rpoB"/>
    <property type="match status" value="1"/>
</dbReference>
<dbReference type="PANTHER" id="PTHR20856">
    <property type="entry name" value="DNA-DIRECTED RNA POLYMERASE I SUBUNIT 2"/>
    <property type="match status" value="1"/>
</dbReference>
<dbReference type="Pfam" id="PF04563">
    <property type="entry name" value="RNA_pol_Rpb2_1"/>
    <property type="match status" value="1"/>
</dbReference>
<dbReference type="Pfam" id="PF04561">
    <property type="entry name" value="RNA_pol_Rpb2_2"/>
    <property type="match status" value="1"/>
</dbReference>
<dbReference type="Pfam" id="PF04565">
    <property type="entry name" value="RNA_pol_Rpb2_3"/>
    <property type="match status" value="1"/>
</dbReference>
<dbReference type="Pfam" id="PF10385">
    <property type="entry name" value="RNA_pol_Rpb2_45"/>
    <property type="match status" value="1"/>
</dbReference>
<dbReference type="Pfam" id="PF00562">
    <property type="entry name" value="RNA_pol_Rpb2_6"/>
    <property type="match status" value="1"/>
</dbReference>
<dbReference type="Pfam" id="PF04560">
    <property type="entry name" value="RNA_pol_Rpb2_7"/>
    <property type="match status" value="1"/>
</dbReference>
<dbReference type="SUPFAM" id="SSF64484">
    <property type="entry name" value="beta and beta-prime subunits of DNA dependent RNA-polymerase"/>
    <property type="match status" value="1"/>
</dbReference>
<dbReference type="PROSITE" id="PS01166">
    <property type="entry name" value="RNA_POL_BETA"/>
    <property type="match status" value="1"/>
</dbReference>
<sequence>MEIKRFGRIREVIPLPPLTEIQVESYKKALQADVPPEKRENVGIQAAFKETFPIEEGDKGKGGLVLDFLEYRIGDPPFSQDECREKDLTYQAPLYARLQLIHKDTGLIKEDEVFLGHLPLMTEDGSFIINGADRVIVSQIHRSPGVYFTPDPARPGRYIASIIPLPKRGPWIDLEVEASGVVTMKVNKRKFPLVLLLRVLGYDQETLVRELSAYGDLVQGLLDEAVLAMRPEEAMVRLFTLLRPGDPPKKDKALAYLFGLLADPKRYDLGEAGRYKAEEKLGVGLSGRTLVRFEDGEFKDEVFLPTLRYLFALTAGVPGHEVDDIDHLGNRRIRTVGELMADQFRVGLARLARGVRERMVMGSPDTLTPAKLVNSRPLEAALREFFSRSQLSQFKDETNPLSSLRHKRRISALGPGGLTRERAGFDVRDVHRTHYGRICPVETPEGANIGLITSLAAYARVDALGFIRTPYRRVKNGVVTEEVVYMTASEEDRYTIAQANTPLEGDRIATDRVVARRRGEPVIVAPEEVEFMDVSPKQVFSLNTNLIPFLEHDDANRALMGSNMQTQAVPLIRAQAPVVMTGLEERVVRDSLAALYAEEDGEVVKVDGTRIAVRYEDGRLVEHPLRRYARSNQGTAFDQRPRVRVGQRVKKGDLLADGPASEEGFLALGQNVLVAIMPFDGYNFEDAIVISEELLKRDFYTSIHIERYEIEARDTKLGPERITRDIPHLSEAALRDLDEEGIVRIGAEVKPGDILVGRTSFKGEQEPSPEERLLRSIFGEKARDVKDTSLRVPPGEGGIVVGRLRLRRGDPGVELKPGVREVVRVFVAQKRKLQVGDKLANRHGNKGVVAKILPVEDMPHLPDGTPVDVILNPLGVPSRMNLGQILETHLGLAGYFLGQRYISPVFDGATEPEIKELLAEAFNLYFGKRQGEGFGVDKREKEVLARAEKLGLVSPGKSPEEQLKELFDLGKVVLYDGRTGEPFEGPIVVGQMFIMKLYHMVEDKMHARSTGPYSLITQQPLGGKAQFGGQRFGEMEVWALEAYGAAHTLQEMLTIKSDDIEGRNAAYQAIIKGEDVPEPSVPESFRVLVKELQALALDVQTLDEKDNPVDIFEGLASKR</sequence>
<name>RPOB_THEAQ</name>
<feature type="chain" id="PRO_0000047983" description="DNA-directed RNA polymerase subunit beta">
    <location>
        <begin position="1"/>
        <end position="1119"/>
    </location>
</feature>
<feature type="strand" evidence="7">
    <location>
        <begin position="3"/>
        <end position="5"/>
    </location>
</feature>
<feature type="helix" evidence="6">
    <location>
        <begin position="18"/>
        <end position="30"/>
    </location>
</feature>
<feature type="turn" evidence="6">
    <location>
        <begin position="36"/>
        <end position="38"/>
    </location>
</feature>
<feature type="strand" evidence="5">
    <location>
        <begin position="41"/>
        <end position="43"/>
    </location>
</feature>
<feature type="helix" evidence="6">
    <location>
        <begin position="44"/>
        <end position="51"/>
    </location>
</feature>
<feature type="strand" evidence="6">
    <location>
        <begin position="54"/>
        <end position="57"/>
    </location>
</feature>
<feature type="helix" evidence="6">
    <location>
        <begin position="59"/>
        <end position="62"/>
    </location>
</feature>
<feature type="strand" evidence="6">
    <location>
        <begin position="64"/>
        <end position="73"/>
    </location>
</feature>
<feature type="helix" evidence="6">
    <location>
        <begin position="80"/>
        <end position="84"/>
    </location>
</feature>
<feature type="turn" evidence="6">
    <location>
        <begin position="85"/>
        <end position="87"/>
    </location>
</feature>
<feature type="strand" evidence="6">
    <location>
        <begin position="91"/>
        <end position="102"/>
    </location>
</feature>
<feature type="turn" evidence="6">
    <location>
        <begin position="103"/>
        <end position="105"/>
    </location>
</feature>
<feature type="strand" evidence="6">
    <location>
        <begin position="108"/>
        <end position="119"/>
    </location>
</feature>
<feature type="strand" evidence="6">
    <location>
        <begin position="123"/>
        <end position="125"/>
    </location>
</feature>
<feature type="strand" evidence="7">
    <location>
        <begin position="127"/>
        <end position="129"/>
    </location>
</feature>
<feature type="strand" evidence="7">
    <location>
        <begin position="132"/>
        <end position="136"/>
    </location>
</feature>
<feature type="strand" evidence="7">
    <location>
        <begin position="138"/>
        <end position="142"/>
    </location>
</feature>
<feature type="strand" evidence="4">
    <location>
        <begin position="144"/>
        <end position="146"/>
    </location>
</feature>
<feature type="helix" evidence="6">
    <location>
        <begin position="147"/>
        <end position="156"/>
    </location>
</feature>
<feature type="strand" evidence="7">
    <location>
        <begin position="158"/>
        <end position="163"/>
    </location>
</feature>
<feature type="strand" evidence="3">
    <location>
        <begin position="164"/>
        <end position="169"/>
    </location>
</feature>
<feature type="strand" evidence="7">
    <location>
        <begin position="172"/>
        <end position="176"/>
    </location>
</feature>
<feature type="strand" evidence="2">
    <location>
        <begin position="178"/>
        <end position="180"/>
    </location>
</feature>
<feature type="strand" evidence="7">
    <location>
        <begin position="182"/>
        <end position="188"/>
    </location>
</feature>
<feature type="strand" evidence="7">
    <location>
        <begin position="190"/>
        <end position="192"/>
    </location>
</feature>
<feature type="helix" evidence="7">
    <location>
        <begin position="193"/>
        <end position="199"/>
    </location>
</feature>
<feature type="helix" evidence="7">
    <location>
        <begin position="204"/>
        <end position="209"/>
    </location>
</feature>
<feature type="helix" evidence="7">
    <location>
        <begin position="212"/>
        <end position="214"/>
    </location>
</feature>
<feature type="helix" evidence="7">
    <location>
        <begin position="218"/>
        <end position="220"/>
    </location>
</feature>
<feature type="turn" evidence="7">
    <location>
        <begin position="224"/>
        <end position="228"/>
    </location>
</feature>
<feature type="helix" evidence="7">
    <location>
        <begin position="231"/>
        <end position="242"/>
    </location>
</feature>
<feature type="strand" evidence="4">
    <location>
        <begin position="243"/>
        <end position="245"/>
    </location>
</feature>
<feature type="helix" evidence="7">
    <location>
        <begin position="250"/>
        <end position="261"/>
    </location>
</feature>
<feature type="turn" evidence="7">
    <location>
        <begin position="264"/>
        <end position="266"/>
    </location>
</feature>
<feature type="helix" evidence="7">
    <location>
        <begin position="271"/>
        <end position="281"/>
    </location>
</feature>
<feature type="strand" evidence="7">
    <location>
        <begin position="286"/>
        <end position="294"/>
    </location>
</feature>
<feature type="strand" evidence="7">
    <location>
        <begin position="297"/>
        <end position="302"/>
    </location>
</feature>
<feature type="helix" evidence="7">
    <location>
        <begin position="303"/>
        <end position="315"/>
    </location>
</feature>
<feature type="strand" evidence="3">
    <location>
        <begin position="316"/>
        <end position="318"/>
    </location>
</feature>
<feature type="strand" evidence="7">
    <location>
        <begin position="330"/>
        <end position="334"/>
    </location>
</feature>
<feature type="helix" evidence="6">
    <location>
        <begin position="348"/>
        <end position="351"/>
    </location>
</feature>
<feature type="turn" evidence="6">
    <location>
        <begin position="352"/>
        <end position="354"/>
    </location>
</feature>
<feature type="helix" evidence="6">
    <location>
        <begin position="355"/>
        <end position="358"/>
    </location>
</feature>
<feature type="strand" evidence="7">
    <location>
        <begin position="360"/>
        <end position="362"/>
    </location>
</feature>
<feature type="turn" evidence="6">
    <location>
        <begin position="364"/>
        <end position="366"/>
    </location>
</feature>
<feature type="helix" evidence="6">
    <location>
        <begin position="369"/>
        <end position="372"/>
    </location>
</feature>
<feature type="helix" evidence="6">
    <location>
        <begin position="376"/>
        <end position="385"/>
    </location>
</feature>
<feature type="strand" evidence="7">
    <location>
        <begin position="392"/>
        <end position="394"/>
    </location>
</feature>
<feature type="helix" evidence="7">
    <location>
        <begin position="400"/>
        <end position="406"/>
    </location>
</feature>
<feature type="strand" evidence="7">
    <location>
        <begin position="409"/>
        <end position="412"/>
    </location>
</feature>
<feature type="strand" evidence="4">
    <location>
        <begin position="414"/>
        <end position="418"/>
    </location>
</feature>
<feature type="turn" evidence="7">
    <location>
        <begin position="424"/>
        <end position="428"/>
    </location>
</feature>
<feature type="helix" evidence="7">
    <location>
        <begin position="432"/>
        <end position="434"/>
    </location>
</feature>
<feature type="turn" evidence="7">
    <location>
        <begin position="435"/>
        <end position="437"/>
    </location>
</feature>
<feature type="turn" evidence="7">
    <location>
        <begin position="447"/>
        <end position="451"/>
    </location>
</feature>
<feature type="strand" evidence="7">
    <location>
        <begin position="452"/>
        <end position="455"/>
    </location>
</feature>
<feature type="strand" evidence="2">
    <location>
        <begin position="456"/>
        <end position="458"/>
    </location>
</feature>
<feature type="strand" evidence="7">
    <location>
        <begin position="467"/>
        <end position="486"/>
    </location>
</feature>
<feature type="helix" evidence="7">
    <location>
        <begin position="488"/>
        <end position="491"/>
    </location>
</feature>
<feature type="strand" evidence="7">
    <location>
        <begin position="494"/>
        <end position="497"/>
    </location>
</feature>
<feature type="strand" evidence="4">
    <location>
        <begin position="499"/>
        <end position="501"/>
    </location>
</feature>
<feature type="strand" evidence="7">
    <location>
        <begin position="503"/>
        <end position="508"/>
    </location>
</feature>
<feature type="strand" evidence="7">
    <location>
        <begin position="511"/>
        <end position="519"/>
    </location>
</feature>
<feature type="strand" evidence="7">
    <location>
        <begin position="521"/>
        <end position="524"/>
    </location>
</feature>
<feature type="helix" evidence="4">
    <location>
        <begin position="526"/>
        <end position="528"/>
    </location>
</feature>
<feature type="strand" evidence="7">
    <location>
        <begin position="531"/>
        <end position="534"/>
    </location>
</feature>
<feature type="helix" evidence="7">
    <location>
        <begin position="536"/>
        <end position="539"/>
    </location>
</feature>
<feature type="helix" evidence="7">
    <location>
        <begin position="544"/>
        <end position="546"/>
    </location>
</feature>
<feature type="helix" evidence="7">
    <location>
        <begin position="550"/>
        <end position="552"/>
    </location>
</feature>
<feature type="helix" evidence="7">
    <location>
        <begin position="555"/>
        <end position="565"/>
    </location>
</feature>
<feature type="strand" evidence="7">
    <location>
        <begin position="578"/>
        <end position="580"/>
    </location>
</feature>
<feature type="helix" evidence="7">
    <location>
        <begin position="584"/>
        <end position="590"/>
    </location>
</feature>
<feature type="strand" evidence="7">
    <location>
        <begin position="594"/>
        <end position="596"/>
    </location>
</feature>
<feature type="strand" evidence="7">
    <location>
        <begin position="598"/>
        <end position="607"/>
    </location>
</feature>
<feature type="strand" evidence="7">
    <location>
        <begin position="610"/>
        <end position="615"/>
    </location>
</feature>
<feature type="strand" evidence="4">
    <location>
        <begin position="616"/>
        <end position="618"/>
    </location>
</feature>
<feature type="strand" evidence="7">
    <location>
        <begin position="620"/>
        <end position="624"/>
    </location>
</feature>
<feature type="strand" evidence="7">
    <location>
        <begin position="628"/>
        <end position="630"/>
    </location>
</feature>
<feature type="strand" evidence="7">
    <location>
        <begin position="634"/>
        <end position="637"/>
    </location>
</feature>
<feature type="strand" evidence="2">
    <location>
        <begin position="650"/>
        <end position="652"/>
    </location>
</feature>
<feature type="strand" evidence="7">
    <location>
        <begin position="654"/>
        <end position="657"/>
    </location>
</feature>
<feature type="strand" evidence="4">
    <location>
        <begin position="659"/>
        <end position="662"/>
    </location>
</feature>
<feature type="strand" evidence="7">
    <location>
        <begin position="669"/>
        <end position="677"/>
    </location>
</feature>
<feature type="turn" evidence="7">
    <location>
        <begin position="680"/>
        <end position="683"/>
    </location>
</feature>
<feature type="helix" evidence="7">
    <location>
        <begin position="684"/>
        <end position="686"/>
    </location>
</feature>
<feature type="strand" evidence="7">
    <location>
        <begin position="688"/>
        <end position="691"/>
    </location>
</feature>
<feature type="helix" evidence="7">
    <location>
        <begin position="692"/>
        <end position="696"/>
    </location>
</feature>
<feature type="turn" evidence="7">
    <location>
        <begin position="697"/>
        <end position="700"/>
    </location>
</feature>
<feature type="strand" evidence="7">
    <location>
        <begin position="702"/>
        <end position="715"/>
    </location>
</feature>
<feature type="turn" evidence="3">
    <location>
        <begin position="727"/>
        <end position="730"/>
    </location>
</feature>
<feature type="helix" evidence="7">
    <location>
        <begin position="732"/>
        <end position="734"/>
    </location>
</feature>
<feature type="strand" evidence="7">
    <location>
        <begin position="741"/>
        <end position="743"/>
    </location>
</feature>
<feature type="strand" evidence="7">
    <location>
        <begin position="754"/>
        <end position="756"/>
    </location>
</feature>
<feature type="strand" evidence="7">
    <location>
        <begin position="758"/>
        <end position="761"/>
    </location>
</feature>
<feature type="helix" evidence="7">
    <location>
        <begin position="769"/>
        <end position="778"/>
    </location>
</feature>
<feature type="strand" evidence="7">
    <location>
        <begin position="784"/>
        <end position="787"/>
    </location>
</feature>
<feature type="strand" evidence="7">
    <location>
        <begin position="798"/>
        <end position="807"/>
    </location>
</feature>
<feature type="strand" evidence="4">
    <location>
        <begin position="808"/>
        <end position="810"/>
    </location>
</feature>
<feature type="strand" evidence="7">
    <location>
        <begin position="819"/>
        <end position="831"/>
    </location>
</feature>
<feature type="strand" evidence="7">
    <location>
        <begin position="838"/>
        <end position="840"/>
    </location>
</feature>
<feature type="strand" evidence="3">
    <location>
        <begin position="842"/>
        <end position="844"/>
    </location>
</feature>
<feature type="strand" evidence="7">
    <location>
        <begin position="846"/>
        <end position="853"/>
    </location>
</feature>
<feature type="turn" evidence="7">
    <location>
        <begin position="855"/>
        <end position="857"/>
    </location>
</feature>
<feature type="strand" evidence="7">
    <location>
        <begin position="868"/>
        <end position="871"/>
    </location>
</feature>
<feature type="helix" evidence="7">
    <location>
        <begin position="873"/>
        <end position="875"/>
    </location>
</feature>
<feature type="turn" evidence="7">
    <location>
        <begin position="877"/>
        <end position="879"/>
    </location>
</feature>
<feature type="helix" evidence="7">
    <location>
        <begin position="883"/>
        <end position="897"/>
    </location>
</feature>
<feature type="strand" evidence="7">
    <location>
        <begin position="900"/>
        <end position="902"/>
    </location>
</feature>
<feature type="turn" evidence="4">
    <location>
        <begin position="905"/>
        <end position="907"/>
    </location>
</feature>
<feature type="helix" evidence="7">
    <location>
        <begin position="911"/>
        <end position="931"/>
    </location>
</feature>
<feature type="helix" evidence="7">
    <location>
        <begin position="938"/>
        <end position="949"/>
    </location>
</feature>
<feature type="strand" evidence="2">
    <location>
        <begin position="955"/>
        <end position="957"/>
    </location>
</feature>
<feature type="helix" evidence="7">
    <location>
        <begin position="959"/>
        <end position="967"/>
    </location>
</feature>
<feature type="turn" evidence="7">
    <location>
        <begin position="968"/>
        <end position="970"/>
    </location>
</feature>
<feature type="turn" evidence="7">
    <location>
        <begin position="977"/>
        <end position="979"/>
    </location>
</feature>
<feature type="strand" evidence="7">
    <location>
        <begin position="987"/>
        <end position="997"/>
    </location>
</feature>
<feature type="turn" evidence="3">
    <location>
        <begin position="998"/>
        <end position="1000"/>
    </location>
</feature>
<feature type="helix" evidence="7">
    <location>
        <begin position="1001"/>
        <end position="1003"/>
    </location>
</feature>
<feature type="strand" evidence="7">
    <location>
        <begin position="1006"/>
        <end position="1010"/>
    </location>
</feature>
<feature type="strand" evidence="7">
    <location>
        <begin position="1013"/>
        <end position="1017"/>
    </location>
</feature>
<feature type="strand" evidence="7">
    <location>
        <begin position="1024"/>
        <end position="1026"/>
    </location>
</feature>
<feature type="strand" evidence="7">
    <location>
        <begin position="1030"/>
        <end position="1033"/>
    </location>
</feature>
<feature type="helix" evidence="7">
    <location>
        <begin position="1034"/>
        <end position="1043"/>
    </location>
</feature>
<feature type="helix" evidence="7">
    <location>
        <begin position="1046"/>
        <end position="1053"/>
    </location>
</feature>
<feature type="turn" evidence="7">
    <location>
        <begin position="1054"/>
        <end position="1058"/>
    </location>
</feature>
<feature type="helix" evidence="7">
    <location>
        <begin position="1060"/>
        <end position="1071"/>
    </location>
</feature>
<feature type="helix" evidence="7">
    <location>
        <begin position="1083"/>
        <end position="1093"/>
    </location>
</feature>
<feature type="turn" evidence="7">
    <location>
        <begin position="1094"/>
        <end position="1096"/>
    </location>
</feature>
<feature type="strand" evidence="7">
    <location>
        <begin position="1097"/>
        <end position="1102"/>
    </location>
</feature>
<feature type="strand" evidence="2">
    <location>
        <begin position="1106"/>
        <end position="1108"/>
    </location>
</feature>
<feature type="strand" evidence="7">
    <location>
        <begin position="1111"/>
        <end position="1116"/>
    </location>
</feature>
<gene>
    <name evidence="1" type="primary">rpoB</name>
</gene>
<proteinExistence type="evidence at protein level"/>
<evidence type="ECO:0000255" key="1">
    <source>
        <dbReference type="HAMAP-Rule" id="MF_01321"/>
    </source>
</evidence>
<evidence type="ECO:0007829" key="2">
    <source>
        <dbReference type="PDB" id="1HQM"/>
    </source>
</evidence>
<evidence type="ECO:0007829" key="3">
    <source>
        <dbReference type="PDB" id="1I6V"/>
    </source>
</evidence>
<evidence type="ECO:0007829" key="4">
    <source>
        <dbReference type="PDB" id="1YNJ"/>
    </source>
</evidence>
<evidence type="ECO:0007829" key="5">
    <source>
        <dbReference type="PDB" id="1YNN"/>
    </source>
</evidence>
<evidence type="ECO:0007829" key="6">
    <source>
        <dbReference type="PDB" id="4XAX"/>
    </source>
</evidence>
<evidence type="ECO:0007829" key="7">
    <source>
        <dbReference type="PDB" id="5TJG"/>
    </source>
</evidence>
<protein>
    <recommendedName>
        <fullName evidence="1">DNA-directed RNA polymerase subunit beta</fullName>
        <shortName evidence="1">RNAP subunit beta</shortName>
        <ecNumber evidence="1">2.7.7.6</ecNumber>
    </recommendedName>
    <alternativeName>
        <fullName evidence="1">RNA polymerase subunit beta</fullName>
    </alternativeName>
    <alternativeName>
        <fullName evidence="1">Transcriptase subunit beta</fullName>
    </alternativeName>
</protein>